<name>RHAA_SALTI</name>
<dbReference type="EC" id="5.3.1.14" evidence="1"/>
<dbReference type="EMBL" id="AL513382">
    <property type="protein sequence ID" value="CAD09578.1"/>
    <property type="molecule type" value="Genomic_DNA"/>
</dbReference>
<dbReference type="EMBL" id="AE014613">
    <property type="protein sequence ID" value="AAO71077.1"/>
    <property type="molecule type" value="Genomic_DNA"/>
</dbReference>
<dbReference type="RefSeq" id="NP_458004.1">
    <property type="nucleotide sequence ID" value="NC_003198.1"/>
</dbReference>
<dbReference type="RefSeq" id="WP_000211475.1">
    <property type="nucleotide sequence ID" value="NZ_WSUR01000010.1"/>
</dbReference>
<dbReference type="SMR" id="Q8Z2V3"/>
<dbReference type="STRING" id="220341.gene:17587689"/>
<dbReference type="KEGG" id="stt:t3573"/>
<dbReference type="KEGG" id="sty:STY3827"/>
<dbReference type="PATRIC" id="fig|220341.7.peg.3907"/>
<dbReference type="eggNOG" id="COG4806">
    <property type="taxonomic scope" value="Bacteria"/>
</dbReference>
<dbReference type="HOGENOM" id="CLU_052790_0_0_6"/>
<dbReference type="OMA" id="SIHCWQG"/>
<dbReference type="OrthoDB" id="9766697at2"/>
<dbReference type="UniPathway" id="UPA00541">
    <property type="reaction ID" value="UER00601"/>
</dbReference>
<dbReference type="Proteomes" id="UP000000541">
    <property type="component" value="Chromosome"/>
</dbReference>
<dbReference type="Proteomes" id="UP000002670">
    <property type="component" value="Chromosome"/>
</dbReference>
<dbReference type="GO" id="GO:0005737">
    <property type="term" value="C:cytoplasm"/>
    <property type="evidence" value="ECO:0007669"/>
    <property type="project" value="UniProtKB-SubCell"/>
</dbReference>
<dbReference type="GO" id="GO:0008740">
    <property type="term" value="F:L-rhamnose isomerase activity"/>
    <property type="evidence" value="ECO:0007669"/>
    <property type="project" value="UniProtKB-UniRule"/>
</dbReference>
<dbReference type="GO" id="GO:0030145">
    <property type="term" value="F:manganese ion binding"/>
    <property type="evidence" value="ECO:0007669"/>
    <property type="project" value="UniProtKB-UniRule"/>
</dbReference>
<dbReference type="GO" id="GO:0019324">
    <property type="term" value="P:L-lyxose metabolic process"/>
    <property type="evidence" value="ECO:0007669"/>
    <property type="project" value="TreeGrafter"/>
</dbReference>
<dbReference type="GO" id="GO:0019301">
    <property type="term" value="P:rhamnose catabolic process"/>
    <property type="evidence" value="ECO:0007669"/>
    <property type="project" value="UniProtKB-UniRule"/>
</dbReference>
<dbReference type="FunFam" id="3.20.20.150:FF:000006">
    <property type="entry name" value="L-rhamnose isomerase"/>
    <property type="match status" value="1"/>
</dbReference>
<dbReference type="Gene3D" id="3.20.20.150">
    <property type="entry name" value="Divalent-metal-dependent TIM barrel enzymes"/>
    <property type="match status" value="1"/>
</dbReference>
<dbReference type="HAMAP" id="MF_00541">
    <property type="entry name" value="RhaA"/>
    <property type="match status" value="1"/>
</dbReference>
<dbReference type="InterPro" id="IPR050337">
    <property type="entry name" value="L-rhamnose_isomerase"/>
</dbReference>
<dbReference type="InterPro" id="IPR009308">
    <property type="entry name" value="Rhamnose_isomerase"/>
</dbReference>
<dbReference type="InterPro" id="IPR036237">
    <property type="entry name" value="Xyl_isomerase-like_sf"/>
</dbReference>
<dbReference type="NCBIfam" id="NF002203">
    <property type="entry name" value="PRK01076.1"/>
    <property type="match status" value="1"/>
</dbReference>
<dbReference type="NCBIfam" id="TIGR01748">
    <property type="entry name" value="rhaA"/>
    <property type="match status" value="1"/>
</dbReference>
<dbReference type="PANTHER" id="PTHR30268">
    <property type="entry name" value="L-RHAMNOSE ISOMERASE"/>
    <property type="match status" value="1"/>
</dbReference>
<dbReference type="PANTHER" id="PTHR30268:SF0">
    <property type="entry name" value="L-RHAMNOSE ISOMERASE"/>
    <property type="match status" value="1"/>
</dbReference>
<dbReference type="Pfam" id="PF06134">
    <property type="entry name" value="RhaA"/>
    <property type="match status" value="1"/>
</dbReference>
<dbReference type="SUPFAM" id="SSF51658">
    <property type="entry name" value="Xylose isomerase-like"/>
    <property type="match status" value="1"/>
</dbReference>
<keyword id="KW-0963">Cytoplasm</keyword>
<keyword id="KW-0413">Isomerase</keyword>
<keyword id="KW-0464">Manganese</keyword>
<keyword id="KW-0479">Metal-binding</keyword>
<keyword id="KW-0684">Rhamnose metabolism</keyword>
<protein>
    <recommendedName>
        <fullName evidence="1">L-rhamnose isomerase</fullName>
        <ecNumber evidence="1">5.3.1.14</ecNumber>
    </recommendedName>
</protein>
<organism>
    <name type="scientific">Salmonella typhi</name>
    <dbReference type="NCBI Taxonomy" id="90370"/>
    <lineage>
        <taxon>Bacteria</taxon>
        <taxon>Pseudomonadati</taxon>
        <taxon>Pseudomonadota</taxon>
        <taxon>Gammaproteobacteria</taxon>
        <taxon>Enterobacterales</taxon>
        <taxon>Enterobacteriaceae</taxon>
        <taxon>Salmonella</taxon>
    </lineage>
</organism>
<reference key="1">
    <citation type="journal article" date="2001" name="Nature">
        <title>Complete genome sequence of a multiple drug resistant Salmonella enterica serovar Typhi CT18.</title>
        <authorList>
            <person name="Parkhill J."/>
            <person name="Dougan G."/>
            <person name="James K.D."/>
            <person name="Thomson N.R."/>
            <person name="Pickard D."/>
            <person name="Wain J."/>
            <person name="Churcher C.M."/>
            <person name="Mungall K.L."/>
            <person name="Bentley S.D."/>
            <person name="Holden M.T.G."/>
            <person name="Sebaihia M."/>
            <person name="Baker S."/>
            <person name="Basham D."/>
            <person name="Brooks K."/>
            <person name="Chillingworth T."/>
            <person name="Connerton P."/>
            <person name="Cronin A."/>
            <person name="Davis P."/>
            <person name="Davies R.M."/>
            <person name="Dowd L."/>
            <person name="White N."/>
            <person name="Farrar J."/>
            <person name="Feltwell T."/>
            <person name="Hamlin N."/>
            <person name="Haque A."/>
            <person name="Hien T.T."/>
            <person name="Holroyd S."/>
            <person name="Jagels K."/>
            <person name="Krogh A."/>
            <person name="Larsen T.S."/>
            <person name="Leather S."/>
            <person name="Moule S."/>
            <person name="O'Gaora P."/>
            <person name="Parry C."/>
            <person name="Quail M.A."/>
            <person name="Rutherford K.M."/>
            <person name="Simmonds M."/>
            <person name="Skelton J."/>
            <person name="Stevens K."/>
            <person name="Whitehead S."/>
            <person name="Barrell B.G."/>
        </authorList>
    </citation>
    <scope>NUCLEOTIDE SEQUENCE [LARGE SCALE GENOMIC DNA]</scope>
    <source>
        <strain>CT18</strain>
    </source>
</reference>
<reference key="2">
    <citation type="journal article" date="2003" name="J. Bacteriol.">
        <title>Comparative genomics of Salmonella enterica serovar Typhi strains Ty2 and CT18.</title>
        <authorList>
            <person name="Deng W."/>
            <person name="Liou S.-R."/>
            <person name="Plunkett G. III"/>
            <person name="Mayhew G.F."/>
            <person name="Rose D.J."/>
            <person name="Burland V."/>
            <person name="Kodoyianni V."/>
            <person name="Schwartz D.C."/>
            <person name="Blattner F.R."/>
        </authorList>
    </citation>
    <scope>NUCLEOTIDE SEQUENCE [LARGE SCALE GENOMIC DNA]</scope>
    <source>
        <strain>ATCC 700931 / Ty2</strain>
    </source>
</reference>
<gene>
    <name evidence="1" type="primary">rhaA</name>
    <name type="ordered locus">STY3827</name>
    <name type="ordered locus">t3573</name>
</gene>
<sequence>MTTQLEQAWELAKQRFAAVGIDVEEALRQLDRLPVSMHCWQGDDVAGFENPEGSLTGGIQSTGNYPGKARNATELRADLEQALRLIPGPKRLNLHAIYLESDTPVARDQIKPEHFKNWVEWAKANRLGLDFNPTCFSHPLSADGFTLSHPDAKIRQFWIDHCKASRRVSAYFGEQLGTPSVMNIWIPDGMKDITVDRLAPRQRLLEALDEVISEKFDPAHHIDAVESKLFGIGAESYTVGSNEFYMGYATSRQTALCLDAGHFHPTEVISDKISAAMLYVPRLLLHVSRPVRWDSDHVVLLDDETQAIASEIVRHNLFDRVHIGLDFFDASINRVAAWVIGTRNMKKALLRALLEPTDQLRQLEASGDYTARLAMLEEQKSLPWQAVWEMYCQRHDTPAGSQWLDSVRTYEKEILSKRS</sequence>
<feature type="chain" id="PRO_0000090565" description="L-rhamnose isomerase">
    <location>
        <begin position="1"/>
        <end position="419"/>
    </location>
</feature>
<feature type="binding site" evidence="1">
    <location>
        <position position="262"/>
    </location>
    <ligand>
        <name>Mn(2+)</name>
        <dbReference type="ChEBI" id="CHEBI:29035"/>
    </ligand>
</feature>
<feature type="binding site" evidence="1">
    <location>
        <position position="294"/>
    </location>
    <ligand>
        <name>Mn(2+)</name>
        <dbReference type="ChEBI" id="CHEBI:29035"/>
    </ligand>
</feature>
<feature type="binding site" evidence="1">
    <location>
        <position position="296"/>
    </location>
    <ligand>
        <name>Mn(2+)</name>
        <dbReference type="ChEBI" id="CHEBI:29035"/>
    </ligand>
</feature>
<comment type="function">
    <text evidence="1">Catalyzes the interconversion of L-rhamnose and L-rhamnulose.</text>
</comment>
<comment type="catalytic activity">
    <reaction evidence="1">
        <text>L-rhamnopyranose = L-rhamnulose</text>
        <dbReference type="Rhea" id="RHEA:23160"/>
        <dbReference type="ChEBI" id="CHEBI:17897"/>
        <dbReference type="ChEBI" id="CHEBI:62346"/>
        <dbReference type="EC" id="5.3.1.14"/>
    </reaction>
</comment>
<comment type="cofactor">
    <cofactor evidence="1">
        <name>Mn(2+)</name>
        <dbReference type="ChEBI" id="CHEBI:29035"/>
    </cofactor>
    <text evidence="1">Binds 1 Mn(2+) ion per subunit.</text>
</comment>
<comment type="pathway">
    <text evidence="1">Carbohydrate degradation; L-rhamnose degradation; glycerone phosphate from L-rhamnose: step 1/3.</text>
</comment>
<comment type="subunit">
    <text evidence="1">Homotetramer.</text>
</comment>
<comment type="subcellular location">
    <subcellularLocation>
        <location evidence="1">Cytoplasm</location>
    </subcellularLocation>
</comment>
<comment type="similarity">
    <text evidence="1">Belongs to the rhamnose isomerase family.</text>
</comment>
<proteinExistence type="inferred from homology"/>
<evidence type="ECO:0000255" key="1">
    <source>
        <dbReference type="HAMAP-Rule" id="MF_00541"/>
    </source>
</evidence>
<accession>Q8Z2V3</accession>